<evidence type="ECO:0000255" key="1"/>
<evidence type="ECO:0000303" key="2">
    <source>
    </source>
</evidence>
<evidence type="ECO:0000305" key="3"/>
<evidence type="ECO:0000305" key="4">
    <source>
    </source>
</evidence>
<proteinExistence type="inferred from homology"/>
<name>TXK1A_SCOMO</name>
<feature type="signal peptide" evidence="1">
    <location>
        <begin position="1"/>
        <end position="24"/>
    </location>
</feature>
<feature type="chain" id="PRO_0000446828" description="U-scoloptoxin(20)-Sm1a" evidence="3">
    <location>
        <begin position="25"/>
        <end position="70"/>
    </location>
</feature>
<keyword id="KW-1015">Disulfide bond</keyword>
<keyword id="KW-0964">Secreted</keyword>
<keyword id="KW-0732">Signal</keyword>
<keyword id="KW-0800">Toxin</keyword>
<comment type="subcellular location">
    <subcellularLocation>
        <location evidence="4">Secreted</location>
    </subcellularLocation>
</comment>
<comment type="tissue specificity">
    <text evidence="4">Expressed by the venom gland.</text>
</comment>
<comment type="PTM">
    <text evidence="3">Contains 3 disulfide bonds.</text>
</comment>
<comment type="similarity">
    <text evidence="3">Belongs to the scoloptoxin-20 family.</text>
</comment>
<comment type="online information" name="National Center for Biotechnology Information (NCBI)">
    <link uri="https://www.ncbi.nlm.nih.gov/nuccore/GASH01000169"/>
</comment>
<protein>
    <recommendedName>
        <fullName evidence="2">U-scoloptoxin(20)-Sm1a</fullName>
        <shortName evidence="2">U-SLPTX(20)-Sm1a</shortName>
    </recommendedName>
</protein>
<dbReference type="GO" id="GO:0005576">
    <property type="term" value="C:extracellular region"/>
    <property type="evidence" value="ECO:0007669"/>
    <property type="project" value="UniProtKB-SubCell"/>
</dbReference>
<dbReference type="GO" id="GO:0090729">
    <property type="term" value="F:toxin activity"/>
    <property type="evidence" value="ECO:0007669"/>
    <property type="project" value="UniProtKB-KW"/>
</dbReference>
<organism>
    <name type="scientific">Scolopendra morsitans</name>
    <name type="common">Tanzanian blue ringleg centipede</name>
    <dbReference type="NCBI Taxonomy" id="943129"/>
    <lineage>
        <taxon>Eukaryota</taxon>
        <taxon>Metazoa</taxon>
        <taxon>Ecdysozoa</taxon>
        <taxon>Arthropoda</taxon>
        <taxon>Myriapoda</taxon>
        <taxon>Chilopoda</taxon>
        <taxon>Pleurostigmophora</taxon>
        <taxon>Scolopendromorpha</taxon>
        <taxon>Scolopendridae</taxon>
        <taxon>Scolopendra</taxon>
    </lineage>
</organism>
<reference key="1">
    <citation type="journal article" date="2014" name="Mol. Biol. Evol.">
        <title>Clawing through evolution: toxin diversification and convergence in the ancient lineage Chilopoda (centipedes).</title>
        <authorList>
            <person name="Undheim E.A."/>
            <person name="Jones A."/>
            <person name="Clauser K.R."/>
            <person name="Holland J.W."/>
            <person name="Pineda S.S."/>
            <person name="King G.F."/>
            <person name="Fry B.G."/>
        </authorList>
    </citation>
    <scope>NUCLEOTIDE SEQUENCE [MRNA]</scope>
    <scope>NOMENCLATURE</scope>
    <source>
        <tissue>Venom gland</tissue>
    </source>
</reference>
<sequence length="70" mass="8257">MKKRSQVFCIFIAMVLLILPLSMSDVPEICKICGEECERFCFKRRFRFCCYDYGFMKSDDESPSLQIPNV</sequence>
<accession>P0DQF1</accession>